<protein>
    <recommendedName>
        <fullName evidence="1">Large ribosomal subunit protein uL14</fullName>
    </recommendedName>
    <alternativeName>
        <fullName evidence="2">50S ribosomal protein L14</fullName>
    </alternativeName>
</protein>
<organism>
    <name type="scientific">Mycobacteroides abscessus (strain ATCC 19977 / DSM 44196 / CCUG 20993 / CIP 104536 / JCM 13569 / NCTC 13031 / TMC 1543 / L948)</name>
    <name type="common">Mycobacterium abscessus</name>
    <dbReference type="NCBI Taxonomy" id="561007"/>
    <lineage>
        <taxon>Bacteria</taxon>
        <taxon>Bacillati</taxon>
        <taxon>Actinomycetota</taxon>
        <taxon>Actinomycetes</taxon>
        <taxon>Mycobacteriales</taxon>
        <taxon>Mycobacteriaceae</taxon>
        <taxon>Mycobacteroides</taxon>
        <taxon>Mycobacteroides abscessus</taxon>
    </lineage>
</organism>
<comment type="function">
    <text evidence="1">Binds to 23S rRNA. Forms part of two intersubunit bridges in the 70S ribosome.</text>
</comment>
<comment type="subunit">
    <text evidence="1">Part of the 50S ribosomal subunit. Forms a cluster with proteins L3 and L19. In the 70S ribosome, L14 and L19 interact and together make contacts with the 16S rRNA in bridges B5 and B8.</text>
</comment>
<comment type="similarity">
    <text evidence="1">Belongs to the universal ribosomal protein uL14 family.</text>
</comment>
<accession>B1MGD7</accession>
<dbReference type="EMBL" id="CU458896">
    <property type="protein sequence ID" value="CAM63882.1"/>
    <property type="molecule type" value="Genomic_DNA"/>
</dbReference>
<dbReference type="RefSeq" id="WP_005055680.1">
    <property type="nucleotide sequence ID" value="NZ_MLCG01000001.1"/>
</dbReference>
<dbReference type="SMR" id="B1MGD7"/>
<dbReference type="GeneID" id="93380746"/>
<dbReference type="KEGG" id="mab:MAB_3807c"/>
<dbReference type="Proteomes" id="UP000007137">
    <property type="component" value="Chromosome"/>
</dbReference>
<dbReference type="GO" id="GO:0022625">
    <property type="term" value="C:cytosolic large ribosomal subunit"/>
    <property type="evidence" value="ECO:0007669"/>
    <property type="project" value="TreeGrafter"/>
</dbReference>
<dbReference type="GO" id="GO:0070180">
    <property type="term" value="F:large ribosomal subunit rRNA binding"/>
    <property type="evidence" value="ECO:0007669"/>
    <property type="project" value="TreeGrafter"/>
</dbReference>
<dbReference type="GO" id="GO:0003735">
    <property type="term" value="F:structural constituent of ribosome"/>
    <property type="evidence" value="ECO:0007669"/>
    <property type="project" value="InterPro"/>
</dbReference>
<dbReference type="GO" id="GO:0006412">
    <property type="term" value="P:translation"/>
    <property type="evidence" value="ECO:0007669"/>
    <property type="project" value="UniProtKB-UniRule"/>
</dbReference>
<dbReference type="CDD" id="cd00337">
    <property type="entry name" value="Ribosomal_uL14"/>
    <property type="match status" value="1"/>
</dbReference>
<dbReference type="FunFam" id="2.40.150.20:FF:000001">
    <property type="entry name" value="50S ribosomal protein L14"/>
    <property type="match status" value="1"/>
</dbReference>
<dbReference type="Gene3D" id="2.40.150.20">
    <property type="entry name" value="Ribosomal protein L14"/>
    <property type="match status" value="1"/>
</dbReference>
<dbReference type="HAMAP" id="MF_01367">
    <property type="entry name" value="Ribosomal_uL14"/>
    <property type="match status" value="1"/>
</dbReference>
<dbReference type="InterPro" id="IPR000218">
    <property type="entry name" value="Ribosomal_uL14"/>
</dbReference>
<dbReference type="InterPro" id="IPR005745">
    <property type="entry name" value="Ribosomal_uL14_bac-type"/>
</dbReference>
<dbReference type="InterPro" id="IPR019972">
    <property type="entry name" value="Ribosomal_uL14_CS"/>
</dbReference>
<dbReference type="InterPro" id="IPR036853">
    <property type="entry name" value="Ribosomal_uL14_sf"/>
</dbReference>
<dbReference type="NCBIfam" id="TIGR01067">
    <property type="entry name" value="rplN_bact"/>
    <property type="match status" value="1"/>
</dbReference>
<dbReference type="PANTHER" id="PTHR11761">
    <property type="entry name" value="50S/60S RIBOSOMAL PROTEIN L14/L23"/>
    <property type="match status" value="1"/>
</dbReference>
<dbReference type="PANTHER" id="PTHR11761:SF3">
    <property type="entry name" value="LARGE RIBOSOMAL SUBUNIT PROTEIN UL14M"/>
    <property type="match status" value="1"/>
</dbReference>
<dbReference type="Pfam" id="PF00238">
    <property type="entry name" value="Ribosomal_L14"/>
    <property type="match status" value="1"/>
</dbReference>
<dbReference type="SMART" id="SM01374">
    <property type="entry name" value="Ribosomal_L14"/>
    <property type="match status" value="1"/>
</dbReference>
<dbReference type="SUPFAM" id="SSF50193">
    <property type="entry name" value="Ribosomal protein L14"/>
    <property type="match status" value="1"/>
</dbReference>
<dbReference type="PROSITE" id="PS00049">
    <property type="entry name" value="RIBOSOMAL_L14"/>
    <property type="match status" value="1"/>
</dbReference>
<evidence type="ECO:0000255" key="1">
    <source>
        <dbReference type="HAMAP-Rule" id="MF_01367"/>
    </source>
</evidence>
<evidence type="ECO:0000305" key="2"/>
<name>RL14_MYCA9</name>
<sequence length="122" mass="13347">MIQQESRLKVADNTGAKEILCIRVLGGSSRRYAGIGDIIVATVKDAIPGGTVKRGDVVKAVVVRTVKERRRPDGSYIKFDENAAVIIKADNDPRGTRIFGPVGRELRDKKFMKIVSLAPEVL</sequence>
<reference key="1">
    <citation type="journal article" date="2009" name="PLoS ONE">
        <title>Non mycobacterial virulence genes in the genome of the emerging pathogen Mycobacterium abscessus.</title>
        <authorList>
            <person name="Ripoll F."/>
            <person name="Pasek S."/>
            <person name="Schenowitz C."/>
            <person name="Dossat C."/>
            <person name="Barbe V."/>
            <person name="Rottman M."/>
            <person name="Macheras E."/>
            <person name="Heym B."/>
            <person name="Herrmann J.L."/>
            <person name="Daffe M."/>
            <person name="Brosch R."/>
            <person name="Risler J.L."/>
            <person name="Gaillard J.L."/>
        </authorList>
    </citation>
    <scope>NUCLEOTIDE SEQUENCE [LARGE SCALE GENOMIC DNA]</scope>
    <source>
        <strain>ATCC 19977 / DSM 44196 / CCUG 20993 / CIP 104536 / JCM 13569 / NCTC 13031 / TMC 1543 / L948</strain>
    </source>
</reference>
<proteinExistence type="inferred from homology"/>
<keyword id="KW-1185">Reference proteome</keyword>
<keyword id="KW-0687">Ribonucleoprotein</keyword>
<keyword id="KW-0689">Ribosomal protein</keyword>
<keyword id="KW-0694">RNA-binding</keyword>
<keyword id="KW-0699">rRNA-binding</keyword>
<feature type="chain" id="PRO_1000144299" description="Large ribosomal subunit protein uL14">
    <location>
        <begin position="1"/>
        <end position="122"/>
    </location>
</feature>
<gene>
    <name evidence="1" type="primary">rplN</name>
    <name type="ordered locus">MAB_3807c</name>
</gene>